<comment type="function">
    <text evidence="1">Catalyzes the irreversible cleavage of the glycosidic bond in both 5'-methylthioadenosine (MTA) and S-adenosylhomocysteine (SAH/AdoHcy) to adenine and the corresponding thioribose, 5'-methylthioribose and S-ribosylhomocysteine, respectively. Also cleaves 5'-deoxyadenosine, a toxic by-product of radical S-adenosylmethionine (SAM) enzymes, into 5-deoxyribose and adenine.</text>
</comment>
<comment type="catalytic activity">
    <reaction evidence="1">
        <text>S-adenosyl-L-homocysteine + H2O = S-(5-deoxy-D-ribos-5-yl)-L-homocysteine + adenine</text>
        <dbReference type="Rhea" id="RHEA:17805"/>
        <dbReference type="ChEBI" id="CHEBI:15377"/>
        <dbReference type="ChEBI" id="CHEBI:16708"/>
        <dbReference type="ChEBI" id="CHEBI:57856"/>
        <dbReference type="ChEBI" id="CHEBI:58195"/>
        <dbReference type="EC" id="3.2.2.9"/>
    </reaction>
</comment>
<comment type="catalytic activity">
    <reaction evidence="1">
        <text>S-methyl-5'-thioadenosine + H2O = 5-(methylsulfanyl)-D-ribose + adenine</text>
        <dbReference type="Rhea" id="RHEA:13617"/>
        <dbReference type="ChEBI" id="CHEBI:15377"/>
        <dbReference type="ChEBI" id="CHEBI:16708"/>
        <dbReference type="ChEBI" id="CHEBI:17509"/>
        <dbReference type="ChEBI" id="CHEBI:78440"/>
        <dbReference type="EC" id="3.2.2.9"/>
    </reaction>
</comment>
<comment type="catalytic activity">
    <reaction evidence="1">
        <text>5'-deoxyadenosine + H2O = 5-deoxy-D-ribose + adenine</text>
        <dbReference type="Rhea" id="RHEA:29859"/>
        <dbReference type="ChEBI" id="CHEBI:15377"/>
        <dbReference type="ChEBI" id="CHEBI:16708"/>
        <dbReference type="ChEBI" id="CHEBI:17319"/>
        <dbReference type="ChEBI" id="CHEBI:149540"/>
        <dbReference type="EC" id="3.2.2.9"/>
    </reaction>
    <physiologicalReaction direction="left-to-right" evidence="1">
        <dbReference type="Rhea" id="RHEA:29860"/>
    </physiologicalReaction>
</comment>
<comment type="pathway">
    <text evidence="1">Amino-acid biosynthesis; L-methionine biosynthesis via salvage pathway; S-methyl-5-thio-alpha-D-ribose 1-phosphate from S-methyl-5'-thioadenosine (hydrolase route): step 1/2.</text>
</comment>
<comment type="similarity">
    <text evidence="1">Belongs to the PNP/UDP phosphorylase family. MtnN subfamily.</text>
</comment>
<dbReference type="EC" id="3.2.2.9" evidence="1"/>
<dbReference type="EMBL" id="CP000255">
    <property type="protein sequence ID" value="ABD22081.1"/>
    <property type="molecule type" value="Genomic_DNA"/>
</dbReference>
<dbReference type="RefSeq" id="WP_000579275.1">
    <property type="nucleotide sequence ID" value="NZ_CP027476.1"/>
</dbReference>
<dbReference type="SMR" id="Q2FGC5"/>
<dbReference type="KEGG" id="saa:SAUSA300_1558"/>
<dbReference type="HOGENOM" id="CLU_031248_2_2_9"/>
<dbReference type="OMA" id="DQFVHSK"/>
<dbReference type="UniPathway" id="UPA00904">
    <property type="reaction ID" value="UER00871"/>
</dbReference>
<dbReference type="Proteomes" id="UP000001939">
    <property type="component" value="Chromosome"/>
</dbReference>
<dbReference type="GO" id="GO:0005829">
    <property type="term" value="C:cytosol"/>
    <property type="evidence" value="ECO:0007669"/>
    <property type="project" value="TreeGrafter"/>
</dbReference>
<dbReference type="GO" id="GO:0008782">
    <property type="term" value="F:adenosylhomocysteine nucleosidase activity"/>
    <property type="evidence" value="ECO:0007669"/>
    <property type="project" value="UniProtKB-UniRule"/>
</dbReference>
<dbReference type="GO" id="GO:0008930">
    <property type="term" value="F:methylthioadenosine nucleosidase activity"/>
    <property type="evidence" value="ECO:0007669"/>
    <property type="project" value="UniProtKB-UniRule"/>
</dbReference>
<dbReference type="GO" id="GO:0019509">
    <property type="term" value="P:L-methionine salvage from methylthioadenosine"/>
    <property type="evidence" value="ECO:0007669"/>
    <property type="project" value="UniProtKB-UniRule"/>
</dbReference>
<dbReference type="GO" id="GO:0019284">
    <property type="term" value="P:L-methionine salvage from S-adenosylmethionine"/>
    <property type="evidence" value="ECO:0007669"/>
    <property type="project" value="TreeGrafter"/>
</dbReference>
<dbReference type="GO" id="GO:0009164">
    <property type="term" value="P:nucleoside catabolic process"/>
    <property type="evidence" value="ECO:0007669"/>
    <property type="project" value="InterPro"/>
</dbReference>
<dbReference type="CDD" id="cd09008">
    <property type="entry name" value="MTAN"/>
    <property type="match status" value="1"/>
</dbReference>
<dbReference type="FunFam" id="3.40.50.1580:FF:000001">
    <property type="entry name" value="MTA/SAH nucleosidase family protein"/>
    <property type="match status" value="1"/>
</dbReference>
<dbReference type="Gene3D" id="3.40.50.1580">
    <property type="entry name" value="Nucleoside phosphorylase domain"/>
    <property type="match status" value="1"/>
</dbReference>
<dbReference type="HAMAP" id="MF_01684">
    <property type="entry name" value="Salvage_MtnN"/>
    <property type="match status" value="1"/>
</dbReference>
<dbReference type="InterPro" id="IPR010049">
    <property type="entry name" value="MTA_SAH_Nsdase"/>
</dbReference>
<dbReference type="InterPro" id="IPR000845">
    <property type="entry name" value="Nucleoside_phosphorylase_d"/>
</dbReference>
<dbReference type="InterPro" id="IPR035994">
    <property type="entry name" value="Nucleoside_phosphorylase_sf"/>
</dbReference>
<dbReference type="NCBIfam" id="TIGR01704">
    <property type="entry name" value="MTA_SAH-Nsdase"/>
    <property type="match status" value="1"/>
</dbReference>
<dbReference type="NCBIfam" id="NF004079">
    <property type="entry name" value="PRK05584.1"/>
    <property type="match status" value="1"/>
</dbReference>
<dbReference type="PANTHER" id="PTHR46832">
    <property type="entry name" value="5'-METHYLTHIOADENOSINE/S-ADENOSYLHOMOCYSTEINE NUCLEOSIDASE"/>
    <property type="match status" value="1"/>
</dbReference>
<dbReference type="PANTHER" id="PTHR46832:SF1">
    <property type="entry name" value="5'-METHYLTHIOADENOSINE_S-ADENOSYLHOMOCYSTEINE NUCLEOSIDASE"/>
    <property type="match status" value="1"/>
</dbReference>
<dbReference type="Pfam" id="PF01048">
    <property type="entry name" value="PNP_UDP_1"/>
    <property type="match status" value="1"/>
</dbReference>
<dbReference type="SUPFAM" id="SSF53167">
    <property type="entry name" value="Purine and uridine phosphorylases"/>
    <property type="match status" value="1"/>
</dbReference>
<evidence type="ECO:0000255" key="1">
    <source>
        <dbReference type="HAMAP-Rule" id="MF_01684"/>
    </source>
</evidence>
<protein>
    <recommendedName>
        <fullName evidence="1">5'-methylthioadenosine/S-adenosylhomocysteine nucleosidase</fullName>
        <shortName evidence="1">MTA/SAH nucleosidase</shortName>
        <shortName evidence="1">MTAN</shortName>
        <ecNumber evidence="1">3.2.2.9</ecNumber>
    </recommendedName>
    <alternativeName>
        <fullName evidence="1">5'-deoxyadenosine nucleosidase</fullName>
        <shortName evidence="1">DOA nucleosidase</shortName>
        <shortName evidence="1">dAdo nucleosidase</shortName>
    </alternativeName>
    <alternativeName>
        <fullName evidence="1">5'-methylthioadenosine nucleosidase</fullName>
        <shortName evidence="1">MTA nucleosidase</shortName>
    </alternativeName>
    <alternativeName>
        <fullName evidence="1">S-adenosylhomocysteine nucleosidase</fullName>
        <shortName evidence="1">AdoHcy nucleosidase</shortName>
        <shortName evidence="1">SAH nucleosidase</shortName>
        <shortName evidence="1">SRH nucleosidase</shortName>
    </alternativeName>
</protein>
<accession>Q2FGC5</accession>
<proteinExistence type="inferred from homology"/>
<feature type="chain" id="PRO_0000359375" description="5'-methylthioadenosine/S-adenosylhomocysteine nucleosidase">
    <location>
        <begin position="1"/>
        <end position="228"/>
    </location>
</feature>
<feature type="active site" description="Proton acceptor" evidence="1">
    <location>
        <position position="11"/>
    </location>
</feature>
<feature type="active site" description="Proton donor" evidence="1">
    <location>
        <position position="196"/>
    </location>
</feature>
<feature type="binding site" evidence="1">
    <location>
        <position position="77"/>
    </location>
    <ligand>
        <name>substrate</name>
    </ligand>
</feature>
<feature type="binding site" evidence="1">
    <location>
        <position position="151"/>
    </location>
    <ligand>
        <name>substrate</name>
    </ligand>
</feature>
<feature type="binding site" evidence="1">
    <location>
        <begin position="172"/>
        <end position="173"/>
    </location>
    <ligand>
        <name>substrate</name>
    </ligand>
</feature>
<name>MTNN_STAA3</name>
<organism>
    <name type="scientific">Staphylococcus aureus (strain USA300)</name>
    <dbReference type="NCBI Taxonomy" id="367830"/>
    <lineage>
        <taxon>Bacteria</taxon>
        <taxon>Bacillati</taxon>
        <taxon>Bacillota</taxon>
        <taxon>Bacilli</taxon>
        <taxon>Bacillales</taxon>
        <taxon>Staphylococcaceae</taxon>
        <taxon>Staphylococcus</taxon>
    </lineage>
</organism>
<sequence length="228" mass="24534">MIGIIGAMEEEVTILKNKLTQLSEISVAHVKFYTGILKDREVVITQSGIGKVNAAISTTLLINKFKPDVIINTGSAGALDESLNVGDVLISDDVKYHDADATAFGYEYGQIPQMPVAFQSSKPLIEKVSQVVQQQQLTAKVGLIVSGDSFIGSVEQRQKIKKAFPNAMAVEMEATAIAQTCYQFNVPFVVVRAVSDLANGEAEMSFEAFLEKAAVSSSQTVEALVSQL</sequence>
<gene>
    <name evidence="1" type="primary">mtnN</name>
    <name type="ordered locus">SAUSA300_1558</name>
</gene>
<reference key="1">
    <citation type="journal article" date="2006" name="Lancet">
        <title>Complete genome sequence of USA300, an epidemic clone of community-acquired meticillin-resistant Staphylococcus aureus.</title>
        <authorList>
            <person name="Diep B.A."/>
            <person name="Gill S.R."/>
            <person name="Chang R.F."/>
            <person name="Phan T.H."/>
            <person name="Chen J.H."/>
            <person name="Davidson M.G."/>
            <person name="Lin F."/>
            <person name="Lin J."/>
            <person name="Carleton H.A."/>
            <person name="Mongodin E.F."/>
            <person name="Sensabaugh G.F."/>
            <person name="Perdreau-Remington F."/>
        </authorList>
    </citation>
    <scope>NUCLEOTIDE SEQUENCE [LARGE SCALE GENOMIC DNA]</scope>
    <source>
        <strain>USA300</strain>
    </source>
</reference>
<keyword id="KW-0028">Amino-acid biosynthesis</keyword>
<keyword id="KW-0378">Hydrolase</keyword>
<keyword id="KW-0486">Methionine biosynthesis</keyword>